<gene>
    <name evidence="7" type="ordered locus">TK1777</name>
    <name evidence="6" type="ORF">Tko0866</name>
</gene>
<accession>Q6I7B6</accession>
<accession>Q5JJ52</accession>
<protein>
    <recommendedName>
        <fullName evidence="4">Phosphopentomutase</fullName>
        <shortName evidence="4">PPM</shortName>
        <ecNumber evidence="3">5.4.2.7</ecNumber>
    </recommendedName>
</protein>
<feature type="chain" id="PRO_0000433396" description="Phosphopentomutase">
    <location>
        <begin position="1"/>
        <end position="450"/>
    </location>
</feature>
<feature type="active site" description="Phosphoserine intermediate" evidence="2">
    <location>
        <position position="93"/>
    </location>
</feature>
<feature type="binding site" description="via phosphate group" evidence="1">
    <location>
        <position position="93"/>
    </location>
    <ligand>
        <name>Mg(2+)</name>
        <dbReference type="ChEBI" id="CHEBI:18420"/>
    </ligand>
</feature>
<feature type="binding site" evidence="1">
    <location>
        <position position="231"/>
    </location>
    <ligand>
        <name>Mg(2+)</name>
        <dbReference type="ChEBI" id="CHEBI:18420"/>
    </ligand>
</feature>
<feature type="binding site" evidence="1">
    <location>
        <position position="233"/>
    </location>
    <ligand>
        <name>Mg(2+)</name>
        <dbReference type="ChEBI" id="CHEBI:18420"/>
    </ligand>
</feature>
<feature type="binding site" evidence="1">
    <location>
        <position position="235"/>
    </location>
    <ligand>
        <name>Mg(2+)</name>
        <dbReference type="ChEBI" id="CHEBI:18420"/>
    </ligand>
</feature>
<feature type="modified residue" description="Phosphoserine; by autocatalysis" evidence="2">
    <location>
        <position position="93"/>
    </location>
</feature>
<feature type="strand" evidence="8">
    <location>
        <begin position="8"/>
        <end position="13"/>
    </location>
</feature>
<feature type="turn" evidence="8">
    <location>
        <begin position="14"/>
        <end position="16"/>
    </location>
</feature>
<feature type="helix" evidence="8">
    <location>
        <begin position="19"/>
        <end position="32"/>
    </location>
</feature>
<feature type="strand" evidence="8">
    <location>
        <begin position="35"/>
        <end position="41"/>
    </location>
</feature>
<feature type="helix" evidence="8">
    <location>
        <begin position="47"/>
        <end position="59"/>
    </location>
</feature>
<feature type="turn" evidence="8">
    <location>
        <begin position="60"/>
        <end position="62"/>
    </location>
</feature>
<feature type="strand" evidence="8">
    <location>
        <begin position="64"/>
        <end position="70"/>
    </location>
</feature>
<feature type="helix" evidence="8">
    <location>
        <begin position="73"/>
        <end position="83"/>
    </location>
</feature>
<feature type="strand" evidence="8">
    <location>
        <begin position="85"/>
        <end position="90"/>
    </location>
</feature>
<feature type="strand" evidence="8">
    <location>
        <begin position="99"/>
        <end position="106"/>
    </location>
</feature>
<feature type="helix" evidence="8">
    <location>
        <begin position="114"/>
        <end position="126"/>
    </location>
</feature>
<feature type="helix" evidence="8">
    <location>
        <begin position="134"/>
        <end position="136"/>
    </location>
</feature>
<feature type="helix" evidence="8">
    <location>
        <begin position="146"/>
        <end position="157"/>
    </location>
</feature>
<feature type="strand" evidence="8">
    <location>
        <begin position="164"/>
        <end position="168"/>
    </location>
</feature>
<feature type="helix" evidence="8">
    <location>
        <begin position="173"/>
        <end position="176"/>
    </location>
</feature>
<feature type="helix" evidence="8">
    <location>
        <begin position="178"/>
        <end position="185"/>
    </location>
</feature>
<feature type="strand" evidence="8">
    <location>
        <begin position="188"/>
        <end position="193"/>
    </location>
</feature>
<feature type="helix" evidence="8">
    <location>
        <begin position="209"/>
        <end position="211"/>
    </location>
</feature>
<feature type="helix" evidence="8">
    <location>
        <begin position="215"/>
        <end position="222"/>
    </location>
</feature>
<feature type="strand" evidence="8">
    <location>
        <begin position="225"/>
        <end position="229"/>
    </location>
</feature>
<feature type="strand" evidence="8">
    <location>
        <begin position="238"/>
        <end position="241"/>
    </location>
</feature>
<feature type="helix" evidence="8">
    <location>
        <begin position="249"/>
        <end position="264"/>
    </location>
</feature>
<feature type="strand" evidence="8">
    <location>
        <begin position="268"/>
        <end position="272"/>
    </location>
</feature>
<feature type="helix" evidence="8">
    <location>
        <begin position="277"/>
        <end position="285"/>
    </location>
</feature>
<feature type="strand" evidence="8">
    <location>
        <begin position="289"/>
        <end position="293"/>
    </location>
</feature>
<feature type="helix" evidence="8">
    <location>
        <begin position="298"/>
        <end position="305"/>
    </location>
</feature>
<feature type="strand" evidence="8">
    <location>
        <begin position="308"/>
        <end position="312"/>
    </location>
</feature>
<feature type="strand" evidence="8">
    <location>
        <begin position="315"/>
        <end position="317"/>
    </location>
</feature>
<feature type="turn" evidence="8">
    <location>
        <begin position="319"/>
        <end position="321"/>
    </location>
</feature>
<feature type="strand" evidence="8">
    <location>
        <begin position="323"/>
        <end position="325"/>
    </location>
</feature>
<feature type="helix" evidence="8">
    <location>
        <begin position="327"/>
        <end position="341"/>
    </location>
</feature>
<feature type="helix" evidence="8">
    <location>
        <begin position="344"/>
        <end position="347"/>
    </location>
</feature>
<feature type="turn" evidence="8">
    <location>
        <begin position="348"/>
        <end position="350"/>
    </location>
</feature>
<feature type="strand" evidence="8">
    <location>
        <begin position="355"/>
        <end position="362"/>
    </location>
</feature>
<feature type="helix" evidence="8">
    <location>
        <begin position="365"/>
        <end position="367"/>
    </location>
</feature>
<feature type="helix" evidence="8">
    <location>
        <begin position="369"/>
        <end position="382"/>
    </location>
</feature>
<feature type="turn" evidence="8">
    <location>
        <begin position="383"/>
        <end position="386"/>
    </location>
</feature>
<feature type="strand" evidence="8">
    <location>
        <begin position="388"/>
        <end position="391"/>
    </location>
</feature>
<feature type="strand" evidence="8">
    <location>
        <begin position="393"/>
        <end position="399"/>
    </location>
</feature>
<feature type="strand" evidence="8">
    <location>
        <begin position="405"/>
        <end position="410"/>
    </location>
</feature>
<feature type="strand" evidence="8">
    <location>
        <begin position="412"/>
        <end position="425"/>
    </location>
</feature>
<feature type="helix" evidence="8">
    <location>
        <begin position="426"/>
        <end position="444"/>
    </location>
</feature>
<proteinExistence type="evidence at protein level"/>
<sequence>MRLFGTAGIRGTLWEKVTPELAMKVGMAVGTYKSGKALVGRDGRTSSVMLKNAMISGLLSTGMEVLDADLIPTPALAWGTRKLADAGVMITASHNPPTDNGVKVFNGDGTEFYVEQERGLEEIIFSGNFRKARWDEIKPVRNVEVIPDYINAVLDFVGHETNLKVLYDGANGAGSLVAPYLLREMGAKVLSVNAHVDGHFPGRKPEPRYENIAYLGKLVRELGVDLAIAQDGDADRIAVFDEKGNYVDEDTVIALFAKLYVEEHGGGTVVVSIDTGSRIDAVVERAGGRVVRIPLGQPHDGIKRYKAIFAAEPWKLVHPKFGPWIDPFVTMGLLIKLIDENGPLSELVKEIPTYYLKKANVLCPDEYKAEVVRRAAEEVERKLSSEIKEVLTISGFRIALNDGSWILIRPSGTEPKIRVVAEAPTEKRRDELFEMAYSTVSRIVKEAEKK</sequence>
<dbReference type="EC" id="5.4.2.7" evidence="3"/>
<dbReference type="EMBL" id="AB126239">
    <property type="protein sequence ID" value="BAD23919.1"/>
    <property type="molecule type" value="Genomic_DNA"/>
</dbReference>
<dbReference type="EMBL" id="AP006878">
    <property type="protein sequence ID" value="BAD85966.1"/>
    <property type="molecule type" value="Genomic_DNA"/>
</dbReference>
<dbReference type="RefSeq" id="WP_011250728.1">
    <property type="nucleotide sequence ID" value="NC_006624.1"/>
</dbReference>
<dbReference type="PDB" id="9IX8">
    <property type="method" value="X-ray"/>
    <property type="resolution" value="2.39 A"/>
    <property type="chains" value="A/B/C/D=2-450"/>
</dbReference>
<dbReference type="PDBsum" id="9IX8"/>
<dbReference type="SMR" id="Q6I7B6"/>
<dbReference type="STRING" id="69014.TK1777"/>
<dbReference type="EnsemblBacteria" id="BAD85966">
    <property type="protein sequence ID" value="BAD85966"/>
    <property type="gene ID" value="TK1777"/>
</dbReference>
<dbReference type="GeneID" id="78448307"/>
<dbReference type="KEGG" id="tko:TK1777"/>
<dbReference type="PATRIC" id="fig|69014.16.peg.1733"/>
<dbReference type="eggNOG" id="arCOG00767">
    <property type="taxonomic scope" value="Archaea"/>
</dbReference>
<dbReference type="HOGENOM" id="CLU_016950_7_1_2"/>
<dbReference type="InParanoid" id="Q6I7B6"/>
<dbReference type="OrthoDB" id="10363at2157"/>
<dbReference type="PhylomeDB" id="Q6I7B6"/>
<dbReference type="BRENDA" id="5.4.2.7">
    <property type="organism ID" value="5246"/>
</dbReference>
<dbReference type="Proteomes" id="UP000000536">
    <property type="component" value="Chromosome"/>
</dbReference>
<dbReference type="GO" id="GO:0000287">
    <property type="term" value="F:magnesium ion binding"/>
    <property type="evidence" value="ECO:0007669"/>
    <property type="project" value="InterPro"/>
</dbReference>
<dbReference type="GO" id="GO:0008966">
    <property type="term" value="F:phosphoglucosamine mutase activity"/>
    <property type="evidence" value="ECO:0007669"/>
    <property type="project" value="InterPro"/>
</dbReference>
<dbReference type="GO" id="GO:0004615">
    <property type="term" value="F:phosphomannomutase activity"/>
    <property type="evidence" value="ECO:0000318"/>
    <property type="project" value="GO_Central"/>
</dbReference>
<dbReference type="GO" id="GO:0008973">
    <property type="term" value="F:phosphopentomutase activity"/>
    <property type="evidence" value="ECO:0007669"/>
    <property type="project" value="UniProtKB-EC"/>
</dbReference>
<dbReference type="GO" id="GO:0005975">
    <property type="term" value="P:carbohydrate metabolic process"/>
    <property type="evidence" value="ECO:0007669"/>
    <property type="project" value="InterPro"/>
</dbReference>
<dbReference type="CDD" id="cd03087">
    <property type="entry name" value="PGM_like1"/>
    <property type="match status" value="1"/>
</dbReference>
<dbReference type="FunFam" id="3.40.120.10:FF:000001">
    <property type="entry name" value="Phosphoglucosamine mutase"/>
    <property type="match status" value="1"/>
</dbReference>
<dbReference type="FunFam" id="3.30.310.50:FF:000009">
    <property type="entry name" value="Probable phosphoglucosamine mutase"/>
    <property type="match status" value="1"/>
</dbReference>
<dbReference type="Gene3D" id="3.40.120.10">
    <property type="entry name" value="Alpha-D-Glucose-1,6-Bisphosphate, subunit A, domain 3"/>
    <property type="match status" value="3"/>
</dbReference>
<dbReference type="Gene3D" id="3.30.310.50">
    <property type="entry name" value="Alpha-D-phosphohexomutase, C-terminal domain"/>
    <property type="match status" value="1"/>
</dbReference>
<dbReference type="InterPro" id="IPR005844">
    <property type="entry name" value="A-D-PHexomutase_a/b/a-I"/>
</dbReference>
<dbReference type="InterPro" id="IPR016055">
    <property type="entry name" value="A-D-PHexomutase_a/b/a-I/II/III"/>
</dbReference>
<dbReference type="InterPro" id="IPR005845">
    <property type="entry name" value="A-D-PHexomutase_a/b/a-II"/>
</dbReference>
<dbReference type="InterPro" id="IPR005846">
    <property type="entry name" value="A-D-PHexomutase_a/b/a-III"/>
</dbReference>
<dbReference type="InterPro" id="IPR005843">
    <property type="entry name" value="A-D-PHexomutase_C"/>
</dbReference>
<dbReference type="InterPro" id="IPR036900">
    <property type="entry name" value="A-D-PHexomutase_C_sf"/>
</dbReference>
<dbReference type="InterPro" id="IPR016066">
    <property type="entry name" value="A-D-PHexomutase_CS"/>
</dbReference>
<dbReference type="InterPro" id="IPR005841">
    <property type="entry name" value="Alpha-D-phosphohexomutase_SF"/>
</dbReference>
<dbReference type="InterPro" id="IPR024086">
    <property type="entry name" value="GlmM_arc-type"/>
</dbReference>
<dbReference type="InterPro" id="IPR050060">
    <property type="entry name" value="Phosphoglucosamine_mutase"/>
</dbReference>
<dbReference type="NCBIfam" id="TIGR03990">
    <property type="entry name" value="Arch_GlmM"/>
    <property type="match status" value="1"/>
</dbReference>
<dbReference type="PANTHER" id="PTHR42946:SF6">
    <property type="entry name" value="PHOSPHOGLUCOSAMINE MUTASE-RELATED"/>
    <property type="match status" value="1"/>
</dbReference>
<dbReference type="PANTHER" id="PTHR42946">
    <property type="entry name" value="PHOSPHOHEXOSE MUTASE"/>
    <property type="match status" value="1"/>
</dbReference>
<dbReference type="Pfam" id="PF02878">
    <property type="entry name" value="PGM_PMM_I"/>
    <property type="match status" value="1"/>
</dbReference>
<dbReference type="Pfam" id="PF02879">
    <property type="entry name" value="PGM_PMM_II"/>
    <property type="match status" value="1"/>
</dbReference>
<dbReference type="Pfam" id="PF02880">
    <property type="entry name" value="PGM_PMM_III"/>
    <property type="match status" value="1"/>
</dbReference>
<dbReference type="Pfam" id="PF00408">
    <property type="entry name" value="PGM_PMM_IV"/>
    <property type="match status" value="1"/>
</dbReference>
<dbReference type="PRINTS" id="PR00509">
    <property type="entry name" value="PGMPMM"/>
</dbReference>
<dbReference type="SUPFAM" id="SSF55957">
    <property type="entry name" value="Phosphoglucomutase, C-terminal domain"/>
    <property type="match status" value="1"/>
</dbReference>
<dbReference type="SUPFAM" id="SSF53738">
    <property type="entry name" value="Phosphoglucomutase, first 3 domains"/>
    <property type="match status" value="3"/>
</dbReference>
<dbReference type="PROSITE" id="PS00710">
    <property type="entry name" value="PGM_PMM"/>
    <property type="match status" value="1"/>
</dbReference>
<keyword id="KW-0002">3D-structure</keyword>
<keyword id="KW-0903">Direct protein sequencing</keyword>
<keyword id="KW-0413">Isomerase</keyword>
<keyword id="KW-0460">Magnesium</keyword>
<keyword id="KW-0479">Metal-binding</keyword>
<keyword id="KW-0597">Phosphoprotein</keyword>
<keyword id="KW-1185">Reference proteome</keyword>
<reference key="1">
    <citation type="journal article" date="2004" name="J. Bacteriol.">
        <title>Presence of a novel phosphopentomutase and a 2-deoxyribose 5-phosphate aldolase reveals a metabolic link between pentoses and central carbon metabolism in the hyperthermophilic archaeon Thermococcus kodakaraensis.</title>
        <authorList>
            <person name="Rashid N."/>
            <person name="Imanaka H."/>
            <person name="Fukui T."/>
            <person name="Atomi H."/>
            <person name="Imanaka T."/>
        </authorList>
    </citation>
    <scope>NUCLEOTIDE SEQUENCE [GENOMIC DNA]</scope>
    <scope>PARTIAL PROTEIN SEQUENCE OF 1-7</scope>
    <scope>FUNCTION</scope>
    <scope>CATALYTIC ACTIVITY</scope>
    <scope>COFACTOR</scope>
    <scope>BIOPHYSICOCHEMICAL PROPERTIES</scope>
    <scope>SUBUNIT</scope>
    <source>
        <strain>ATCC BAA-918 / JCM 12380 / KOD1</strain>
    </source>
</reference>
<reference key="2">
    <citation type="journal article" date="2005" name="Genome Res.">
        <title>Complete genome sequence of the hyperthermophilic archaeon Thermococcus kodakaraensis KOD1 and comparison with Pyrococcus genomes.</title>
        <authorList>
            <person name="Fukui T."/>
            <person name="Atomi H."/>
            <person name="Kanai T."/>
            <person name="Matsumi R."/>
            <person name="Fujiwara S."/>
            <person name="Imanaka T."/>
        </authorList>
    </citation>
    <scope>NUCLEOTIDE SEQUENCE [LARGE SCALE GENOMIC DNA]</scope>
    <source>
        <strain>ATCC BAA-918 / JCM 12380 / KOD1</strain>
    </source>
</reference>
<evidence type="ECO:0000250" key="1"/>
<evidence type="ECO:0000250" key="2">
    <source>
        <dbReference type="UniProtKB" id="P31120"/>
    </source>
</evidence>
<evidence type="ECO:0000269" key="3">
    <source>
    </source>
</evidence>
<evidence type="ECO:0000303" key="4">
    <source>
    </source>
</evidence>
<evidence type="ECO:0000305" key="5"/>
<evidence type="ECO:0000312" key="6">
    <source>
        <dbReference type="EMBL" id="BAD23919.1"/>
    </source>
</evidence>
<evidence type="ECO:0000312" key="7">
    <source>
        <dbReference type="EMBL" id="BAD85966.1"/>
    </source>
</evidence>
<evidence type="ECO:0007829" key="8">
    <source>
        <dbReference type="PDB" id="9IX8"/>
    </source>
</evidence>
<comment type="function">
    <text evidence="3">Catalyzes the conversion of deoxyribose 1-phosphate to deoxyribose 5-phosphate. Also shows weak activity with glucose 1-phosphate and mannose 1-phosphate. Could be involved in pentose biosynthesis.</text>
</comment>
<comment type="catalytic activity">
    <reaction evidence="5">
        <text>alpha-D-ribose 1-phosphate = D-ribose 5-phosphate</text>
        <dbReference type="Rhea" id="RHEA:18793"/>
        <dbReference type="ChEBI" id="CHEBI:57720"/>
        <dbReference type="ChEBI" id="CHEBI:78346"/>
        <dbReference type="EC" id="5.4.2.7"/>
    </reaction>
</comment>
<comment type="catalytic activity">
    <reaction evidence="3">
        <text>2-deoxy-alpha-D-ribose 1-phosphate = 2-deoxy-D-ribose 5-phosphate</text>
        <dbReference type="Rhea" id="RHEA:27658"/>
        <dbReference type="ChEBI" id="CHEBI:57259"/>
        <dbReference type="ChEBI" id="CHEBI:62877"/>
        <dbReference type="EC" id="5.4.2.7"/>
    </reaction>
</comment>
<comment type="cofactor">
    <cofactor evidence="3">
        <name>Mg(2+)</name>
        <dbReference type="ChEBI" id="CHEBI:18420"/>
    </cofactor>
    <text evidence="3">Can also use Ni(2+), Mn(2+) and Zn(2+), to a lower extent.</text>
</comment>
<comment type="biophysicochemical properties">
    <kinetics>
        <KM evidence="3">2.5 mM for 2-deoxy-D-ribose 1-phosphate (at 90 degrees Celsius)</KM>
        <Vmax evidence="3">210.0 umol/min/mg enzyme (at 90 degrees Celsius)</Vmax>
        <text evidence="3">kcat is 173 sec(-1) (at 90 degrees Celsius).</text>
    </kinetics>
    <phDependence>
        <text evidence="3">Optimum pH is 7.5.</text>
    </phDependence>
    <temperatureDependence>
        <text evidence="3">Optimum temperature is 90 degrees Celsius.</text>
    </temperatureDependence>
</comment>
<comment type="subunit">
    <text evidence="3">Homotetramer.</text>
</comment>
<comment type="PTM">
    <text evidence="2">Activated by phosphorylation.</text>
</comment>
<comment type="similarity">
    <text evidence="5">Belongs to the phosphohexose mutase family.</text>
</comment>
<name>PPM_THEKO</name>
<organism>
    <name type="scientific">Thermococcus kodakarensis (strain ATCC BAA-918 / JCM 12380 / KOD1)</name>
    <name type="common">Pyrococcus kodakaraensis (strain KOD1)</name>
    <dbReference type="NCBI Taxonomy" id="69014"/>
    <lineage>
        <taxon>Archaea</taxon>
        <taxon>Methanobacteriati</taxon>
        <taxon>Methanobacteriota</taxon>
        <taxon>Thermococci</taxon>
        <taxon>Thermococcales</taxon>
        <taxon>Thermococcaceae</taxon>
        <taxon>Thermococcus</taxon>
    </lineage>
</organism>